<evidence type="ECO:0000255" key="1">
    <source>
        <dbReference type="HAMAP-Rule" id="MF_01020"/>
    </source>
</evidence>
<organism>
    <name type="scientific">Methanococcus maripaludis (strain C6 / ATCC BAA-1332)</name>
    <dbReference type="NCBI Taxonomy" id="444158"/>
    <lineage>
        <taxon>Archaea</taxon>
        <taxon>Methanobacteriati</taxon>
        <taxon>Methanobacteriota</taxon>
        <taxon>Methanomada group</taxon>
        <taxon>Methanococci</taxon>
        <taxon>Methanococcales</taxon>
        <taxon>Methanococcaceae</taxon>
        <taxon>Methanococcus</taxon>
    </lineage>
</organism>
<gene>
    <name evidence="1" type="primary">hisE</name>
    <name type="ordered locus">MmarC6_0898</name>
</gene>
<proteinExistence type="inferred from homology"/>
<keyword id="KW-0028">Amino-acid biosynthesis</keyword>
<keyword id="KW-0067">ATP-binding</keyword>
<keyword id="KW-0963">Cytoplasm</keyword>
<keyword id="KW-0368">Histidine biosynthesis</keyword>
<keyword id="KW-0378">Hydrolase</keyword>
<keyword id="KW-0547">Nucleotide-binding</keyword>
<reference key="1">
    <citation type="submission" date="2007-10" db="EMBL/GenBank/DDBJ databases">
        <title>Complete sequence of Methanococcus maripaludis C6.</title>
        <authorList>
            <consortium name="US DOE Joint Genome Institute"/>
            <person name="Copeland A."/>
            <person name="Lucas S."/>
            <person name="Lapidus A."/>
            <person name="Barry K."/>
            <person name="Glavina del Rio T."/>
            <person name="Dalin E."/>
            <person name="Tice H."/>
            <person name="Pitluck S."/>
            <person name="Clum A."/>
            <person name="Schmutz J."/>
            <person name="Larimer F."/>
            <person name="Land M."/>
            <person name="Hauser L."/>
            <person name="Kyrpides N."/>
            <person name="Mikhailova N."/>
            <person name="Sieprawska-Lupa M."/>
            <person name="Whitman W.B."/>
            <person name="Richardson P."/>
        </authorList>
    </citation>
    <scope>NUCLEOTIDE SEQUENCE [LARGE SCALE GENOMIC DNA]</scope>
    <source>
        <strain>C6 / ATCC BAA-1332</strain>
    </source>
</reference>
<protein>
    <recommendedName>
        <fullName evidence="1">Phosphoribosyl-ATP pyrophosphatase</fullName>
        <shortName evidence="1">PRA-PH</shortName>
        <ecNumber evidence="1">3.6.1.31</ecNumber>
    </recommendedName>
</protein>
<accession>A9A8P0</accession>
<sequence length="96" mass="10901">MNVLKEVYSTIEKRIQEKPEGSYVAKLTTDDKKTAVNKICEKVGEEAAEVILAAKDNDKAEIIYESADLIFHTMVLLAKSGITYEELSEEFKKRMK</sequence>
<dbReference type="EC" id="3.6.1.31" evidence="1"/>
<dbReference type="EMBL" id="CP000867">
    <property type="protein sequence ID" value="ABX01713.1"/>
    <property type="molecule type" value="Genomic_DNA"/>
</dbReference>
<dbReference type="SMR" id="A9A8P0"/>
<dbReference type="STRING" id="444158.MmarC6_0898"/>
<dbReference type="KEGG" id="mmx:MmarC6_0898"/>
<dbReference type="eggNOG" id="arCOG02677">
    <property type="taxonomic scope" value="Archaea"/>
</dbReference>
<dbReference type="HOGENOM" id="CLU_123337_0_0_2"/>
<dbReference type="OrthoDB" id="39686at2157"/>
<dbReference type="PhylomeDB" id="A9A8P0"/>
<dbReference type="UniPathway" id="UPA00031">
    <property type="reaction ID" value="UER00007"/>
</dbReference>
<dbReference type="GO" id="GO:0005737">
    <property type="term" value="C:cytoplasm"/>
    <property type="evidence" value="ECO:0007669"/>
    <property type="project" value="UniProtKB-SubCell"/>
</dbReference>
<dbReference type="GO" id="GO:0005524">
    <property type="term" value="F:ATP binding"/>
    <property type="evidence" value="ECO:0007669"/>
    <property type="project" value="UniProtKB-KW"/>
</dbReference>
<dbReference type="GO" id="GO:0004636">
    <property type="term" value="F:phosphoribosyl-ATP diphosphatase activity"/>
    <property type="evidence" value="ECO:0007669"/>
    <property type="project" value="UniProtKB-UniRule"/>
</dbReference>
<dbReference type="GO" id="GO:0000105">
    <property type="term" value="P:L-histidine biosynthetic process"/>
    <property type="evidence" value="ECO:0007669"/>
    <property type="project" value="UniProtKB-UniRule"/>
</dbReference>
<dbReference type="CDD" id="cd11534">
    <property type="entry name" value="NTP-PPase_HisIE_like"/>
    <property type="match status" value="1"/>
</dbReference>
<dbReference type="FunFam" id="1.10.287.1080:FF:000002">
    <property type="entry name" value="Histidine biosynthesis bifunctional protein HisIE"/>
    <property type="match status" value="1"/>
</dbReference>
<dbReference type="Gene3D" id="1.10.287.1080">
    <property type="entry name" value="MazG-like"/>
    <property type="match status" value="1"/>
</dbReference>
<dbReference type="HAMAP" id="MF_01020">
    <property type="entry name" value="HisE"/>
    <property type="match status" value="1"/>
</dbReference>
<dbReference type="InterPro" id="IPR008179">
    <property type="entry name" value="HisE"/>
</dbReference>
<dbReference type="InterPro" id="IPR021130">
    <property type="entry name" value="PRib-ATP_PPHydrolase-like"/>
</dbReference>
<dbReference type="NCBIfam" id="TIGR03188">
    <property type="entry name" value="histidine_hisI"/>
    <property type="match status" value="1"/>
</dbReference>
<dbReference type="PANTHER" id="PTHR42945">
    <property type="entry name" value="HISTIDINE BIOSYNTHESIS BIFUNCTIONAL PROTEIN"/>
    <property type="match status" value="1"/>
</dbReference>
<dbReference type="PANTHER" id="PTHR42945:SF9">
    <property type="entry name" value="HISTIDINE BIOSYNTHESIS BIFUNCTIONAL PROTEIN HISIE"/>
    <property type="match status" value="1"/>
</dbReference>
<dbReference type="Pfam" id="PF01503">
    <property type="entry name" value="PRA-PH"/>
    <property type="match status" value="1"/>
</dbReference>
<dbReference type="SUPFAM" id="SSF101386">
    <property type="entry name" value="all-alpha NTP pyrophosphatases"/>
    <property type="match status" value="1"/>
</dbReference>
<comment type="catalytic activity">
    <reaction evidence="1">
        <text>1-(5-phospho-beta-D-ribosyl)-ATP + H2O = 1-(5-phospho-beta-D-ribosyl)-5'-AMP + diphosphate + H(+)</text>
        <dbReference type="Rhea" id="RHEA:22828"/>
        <dbReference type="ChEBI" id="CHEBI:15377"/>
        <dbReference type="ChEBI" id="CHEBI:15378"/>
        <dbReference type="ChEBI" id="CHEBI:33019"/>
        <dbReference type="ChEBI" id="CHEBI:59457"/>
        <dbReference type="ChEBI" id="CHEBI:73183"/>
        <dbReference type="EC" id="3.6.1.31"/>
    </reaction>
</comment>
<comment type="pathway">
    <text evidence="1">Amino-acid biosynthesis; L-histidine biosynthesis; L-histidine from 5-phospho-alpha-D-ribose 1-diphosphate: step 2/9.</text>
</comment>
<comment type="subcellular location">
    <subcellularLocation>
        <location evidence="1">Cytoplasm</location>
    </subcellularLocation>
</comment>
<comment type="similarity">
    <text evidence="1">Belongs to the PRA-PH family.</text>
</comment>
<feature type="chain" id="PRO_1000190393" description="Phosphoribosyl-ATP pyrophosphatase">
    <location>
        <begin position="1"/>
        <end position="96"/>
    </location>
</feature>
<name>HIS2_METM6</name>